<comment type="subunit">
    <text evidence="1">Part of the 30S ribosomal subunit.</text>
</comment>
<comment type="subcellular location">
    <subcellularLocation>
        <location>Plastid</location>
        <location>Chloroplast</location>
    </subcellularLocation>
</comment>
<comment type="similarity">
    <text evidence="2">Belongs to the universal ribosomal protein uS3 family.</text>
</comment>
<geneLocation type="chloroplast"/>
<gene>
    <name type="primary">rps3</name>
</gene>
<sequence length="219" mass="25809">MGQKIHPLGFRLGFIQEHYSHWFAKANSYSELLQEDKEIRSCIYNHIRNHVRNSSNYGGIARINIYRRTDLVQLQIHTGFPALLIENRIRGLEHLRRDIQEKIDHKKRKLRMTLVEVLKPYTEPTILAEYIALQLENRVAFRRVMKKAIQLAKISDIKGIKIQIAGRLNGAEIARNEWIQKGRLPLQMLRANIHYCHYPAHTIYGVLGIKVWIFREKII</sequence>
<organism>
    <name type="scientific">Chara vulgaris</name>
    <name type="common">Common stonewort</name>
    <dbReference type="NCBI Taxonomy" id="55564"/>
    <lineage>
        <taxon>Eukaryota</taxon>
        <taxon>Viridiplantae</taxon>
        <taxon>Streptophyta</taxon>
        <taxon>Charophyceae</taxon>
        <taxon>Charales</taxon>
        <taxon>Characeae</taxon>
        <taxon>Chara</taxon>
    </lineage>
</organism>
<keyword id="KW-0150">Chloroplast</keyword>
<keyword id="KW-0934">Plastid</keyword>
<keyword id="KW-0687">Ribonucleoprotein</keyword>
<keyword id="KW-0689">Ribosomal protein</keyword>
<keyword id="KW-0694">RNA-binding</keyword>
<keyword id="KW-0699">rRNA-binding</keyword>
<evidence type="ECO:0000250" key="1"/>
<evidence type="ECO:0000305" key="2"/>
<reference key="1">
    <citation type="journal article" date="2006" name="Mol. Biol. Evol.">
        <title>The chloroplast genome sequence of Chara vulgaris sheds new light into the closest green algal relatives of land plants.</title>
        <authorList>
            <person name="Turmel M."/>
            <person name="Otis C."/>
            <person name="Lemieux C."/>
        </authorList>
    </citation>
    <scope>NUCLEOTIDE SEQUENCE [LARGE SCALE GENOMIC DNA]</scope>
</reference>
<dbReference type="EMBL" id="DQ229107">
    <property type="protein sequence ID" value="ABA61975.1"/>
    <property type="molecule type" value="Genomic_DNA"/>
</dbReference>
<dbReference type="RefSeq" id="YP_635788.1">
    <property type="nucleotide sequence ID" value="NC_008097.1"/>
</dbReference>
<dbReference type="SMR" id="Q1ACF9"/>
<dbReference type="GeneID" id="4100198"/>
<dbReference type="GO" id="GO:0009507">
    <property type="term" value="C:chloroplast"/>
    <property type="evidence" value="ECO:0007669"/>
    <property type="project" value="UniProtKB-SubCell"/>
</dbReference>
<dbReference type="GO" id="GO:0022627">
    <property type="term" value="C:cytosolic small ribosomal subunit"/>
    <property type="evidence" value="ECO:0007669"/>
    <property type="project" value="TreeGrafter"/>
</dbReference>
<dbReference type="GO" id="GO:0019843">
    <property type="term" value="F:rRNA binding"/>
    <property type="evidence" value="ECO:0007669"/>
    <property type="project" value="UniProtKB-UniRule"/>
</dbReference>
<dbReference type="GO" id="GO:0003735">
    <property type="term" value="F:structural constituent of ribosome"/>
    <property type="evidence" value="ECO:0007669"/>
    <property type="project" value="InterPro"/>
</dbReference>
<dbReference type="GO" id="GO:0006412">
    <property type="term" value="P:translation"/>
    <property type="evidence" value="ECO:0007669"/>
    <property type="project" value="UniProtKB-UniRule"/>
</dbReference>
<dbReference type="CDD" id="cd02412">
    <property type="entry name" value="KH-II_30S_S3"/>
    <property type="match status" value="1"/>
</dbReference>
<dbReference type="Gene3D" id="3.30.300.20">
    <property type="match status" value="1"/>
</dbReference>
<dbReference type="Gene3D" id="3.30.1140.32">
    <property type="entry name" value="Ribosomal protein S3, C-terminal domain"/>
    <property type="match status" value="1"/>
</dbReference>
<dbReference type="HAMAP" id="MF_01309_B">
    <property type="entry name" value="Ribosomal_uS3_B"/>
    <property type="match status" value="1"/>
</dbReference>
<dbReference type="InterPro" id="IPR015946">
    <property type="entry name" value="KH_dom-like_a/b"/>
</dbReference>
<dbReference type="InterPro" id="IPR004044">
    <property type="entry name" value="KH_dom_type_2"/>
</dbReference>
<dbReference type="InterPro" id="IPR009019">
    <property type="entry name" value="KH_sf_prok-type"/>
</dbReference>
<dbReference type="InterPro" id="IPR036419">
    <property type="entry name" value="Ribosomal_S3_C_sf"/>
</dbReference>
<dbReference type="InterPro" id="IPR005704">
    <property type="entry name" value="Ribosomal_uS3_bac-typ"/>
</dbReference>
<dbReference type="InterPro" id="IPR001351">
    <property type="entry name" value="Ribosomal_uS3_C"/>
</dbReference>
<dbReference type="NCBIfam" id="TIGR01009">
    <property type="entry name" value="rpsC_bact"/>
    <property type="match status" value="1"/>
</dbReference>
<dbReference type="PANTHER" id="PTHR11760">
    <property type="entry name" value="30S/40S RIBOSOMAL PROTEIN S3"/>
    <property type="match status" value="1"/>
</dbReference>
<dbReference type="PANTHER" id="PTHR11760:SF19">
    <property type="entry name" value="SMALL RIBOSOMAL SUBUNIT PROTEIN US3C"/>
    <property type="match status" value="1"/>
</dbReference>
<dbReference type="Pfam" id="PF00189">
    <property type="entry name" value="Ribosomal_S3_C"/>
    <property type="match status" value="1"/>
</dbReference>
<dbReference type="SUPFAM" id="SSF54814">
    <property type="entry name" value="Prokaryotic type KH domain (KH-domain type II)"/>
    <property type="match status" value="1"/>
</dbReference>
<dbReference type="SUPFAM" id="SSF54821">
    <property type="entry name" value="Ribosomal protein S3 C-terminal domain"/>
    <property type="match status" value="1"/>
</dbReference>
<dbReference type="PROSITE" id="PS50823">
    <property type="entry name" value="KH_TYPE_2"/>
    <property type="match status" value="1"/>
</dbReference>
<name>RR3_CHAVU</name>
<feature type="chain" id="PRO_0000276986" description="Small ribosomal subunit protein uS3c">
    <location>
        <begin position="1"/>
        <end position="219"/>
    </location>
</feature>
<feature type="domain" description="KH type-2">
    <location>
        <begin position="47"/>
        <end position="118"/>
    </location>
</feature>
<protein>
    <recommendedName>
        <fullName evidence="2">Small ribosomal subunit protein uS3c</fullName>
    </recommendedName>
    <alternativeName>
        <fullName>30S ribosomal protein S3, chloroplastic</fullName>
    </alternativeName>
</protein>
<accession>Q1ACF9</accession>
<proteinExistence type="inferred from homology"/>